<sequence>MAPIFKSLALVSALFAAISSAAPVNLDKREVDVVWTTVTTVVWTTIDVTTTIYPTPQAPTPPVVESTPTPTPSAAPEQAEPIETSTQPETTKSQPTQPSVATFIPVAAAAAAADSAAPIPEEPAPQPATTAAPSTSTTTQAAPSAPPAANSGSTEKAASSGYSGPCSKGSPCVGQLTYYDTATSASAPSSCGLTNDGFSENVVALPVGIMTDADCGKTVTITYNGITKTATVVDKCMGCKPTDLDASRHLFGELADFSAGRIDGMSWYFN</sequence>
<organism>
    <name type="scientific">Aspergillus fumigatus (strain ATCC MYA-4609 / CBS 101355 / FGSC A1100 / Af293)</name>
    <name type="common">Neosartorya fumigata</name>
    <dbReference type="NCBI Taxonomy" id="330879"/>
    <lineage>
        <taxon>Eukaryota</taxon>
        <taxon>Fungi</taxon>
        <taxon>Dikarya</taxon>
        <taxon>Ascomycota</taxon>
        <taxon>Pezizomycotina</taxon>
        <taxon>Eurotiomycetes</taxon>
        <taxon>Eurotiomycetidae</taxon>
        <taxon>Eurotiales</taxon>
        <taxon>Aspergillaceae</taxon>
        <taxon>Aspergillus</taxon>
        <taxon>Aspergillus subgen. Fumigati</taxon>
    </lineage>
</organism>
<proteinExistence type="evidence at protein level"/>
<dbReference type="EMBL" id="AAHF01000005">
    <property type="protein sequence ID" value="EAL90121.1"/>
    <property type="molecule type" value="Genomic_DNA"/>
</dbReference>
<dbReference type="EMBL" id="AJ223315">
    <property type="protein sequence ID" value="CAA11255.1"/>
    <property type="molecule type" value="mRNA"/>
</dbReference>
<dbReference type="RefSeq" id="XP_752159.1">
    <property type="nucleotide sequence ID" value="XM_747066.1"/>
</dbReference>
<dbReference type="SMR" id="O42799"/>
<dbReference type="STRING" id="330879.O42799"/>
<dbReference type="Allergome" id="3125">
    <property type="allergen name" value="Asp f 7.0101"/>
</dbReference>
<dbReference type="Allergome" id="77">
    <property type="allergen name" value="Asp f 7"/>
</dbReference>
<dbReference type="EnsemblFungi" id="EAL90121">
    <property type="protein sequence ID" value="EAL90121"/>
    <property type="gene ID" value="AFUA_4G06670"/>
</dbReference>
<dbReference type="GeneID" id="3509245"/>
<dbReference type="KEGG" id="afm:AFUA_4G06670"/>
<dbReference type="VEuPathDB" id="FungiDB:Afu4g06670"/>
<dbReference type="eggNOG" id="ENOG502S2E4">
    <property type="taxonomic scope" value="Eukaryota"/>
</dbReference>
<dbReference type="HOGENOM" id="CLU_052701_1_0_1"/>
<dbReference type="InParanoid" id="O42799"/>
<dbReference type="OMA" id="WETVTDI"/>
<dbReference type="OrthoDB" id="623670at2759"/>
<dbReference type="Proteomes" id="UP000002530">
    <property type="component" value="Chromosome 4"/>
</dbReference>
<dbReference type="CDD" id="cd22191">
    <property type="entry name" value="DPBB_RlpA_EXP_N-like"/>
    <property type="match status" value="1"/>
</dbReference>
<dbReference type="Gene3D" id="2.40.40.10">
    <property type="entry name" value="RlpA-like domain"/>
    <property type="match status" value="1"/>
</dbReference>
<dbReference type="InterPro" id="IPR051477">
    <property type="entry name" value="Expansin_CellWall"/>
</dbReference>
<dbReference type="InterPro" id="IPR036908">
    <property type="entry name" value="RlpA-like_sf"/>
</dbReference>
<dbReference type="PANTHER" id="PTHR31836">
    <property type="match status" value="1"/>
</dbReference>
<dbReference type="PANTHER" id="PTHR31836:SF28">
    <property type="entry name" value="SRCR DOMAIN-CONTAINING PROTEIN-RELATED"/>
    <property type="match status" value="1"/>
</dbReference>
<dbReference type="SUPFAM" id="SSF50685">
    <property type="entry name" value="Barwin-like endoglucanases"/>
    <property type="match status" value="1"/>
</dbReference>
<name>ALL7_ASPFU</name>
<comment type="allergen">
    <text>Causes an allergic reaction in human.</text>
</comment>
<reference key="1">
    <citation type="journal article" date="2005" name="Nature">
        <title>Genomic sequence of the pathogenic and allergenic filamentous fungus Aspergillus fumigatus.</title>
        <authorList>
            <person name="Nierman W.C."/>
            <person name="Pain A."/>
            <person name="Anderson M.J."/>
            <person name="Wortman J.R."/>
            <person name="Kim H.S."/>
            <person name="Arroyo J."/>
            <person name="Berriman M."/>
            <person name="Abe K."/>
            <person name="Archer D.B."/>
            <person name="Bermejo C."/>
            <person name="Bennett J.W."/>
            <person name="Bowyer P."/>
            <person name="Chen D."/>
            <person name="Collins M."/>
            <person name="Coulsen R."/>
            <person name="Davies R."/>
            <person name="Dyer P.S."/>
            <person name="Farman M.L."/>
            <person name="Fedorova N."/>
            <person name="Fedorova N.D."/>
            <person name="Feldblyum T.V."/>
            <person name="Fischer R."/>
            <person name="Fosker N."/>
            <person name="Fraser A."/>
            <person name="Garcia J.L."/>
            <person name="Garcia M.J."/>
            <person name="Goble A."/>
            <person name="Goldman G.H."/>
            <person name="Gomi K."/>
            <person name="Griffith-Jones S."/>
            <person name="Gwilliam R."/>
            <person name="Haas B.J."/>
            <person name="Haas H."/>
            <person name="Harris D.E."/>
            <person name="Horiuchi H."/>
            <person name="Huang J."/>
            <person name="Humphray S."/>
            <person name="Jimenez J."/>
            <person name="Keller N."/>
            <person name="Khouri H."/>
            <person name="Kitamoto K."/>
            <person name="Kobayashi T."/>
            <person name="Konzack S."/>
            <person name="Kulkarni R."/>
            <person name="Kumagai T."/>
            <person name="Lafton A."/>
            <person name="Latge J.-P."/>
            <person name="Li W."/>
            <person name="Lord A."/>
            <person name="Lu C."/>
            <person name="Majoros W.H."/>
            <person name="May G.S."/>
            <person name="Miller B.L."/>
            <person name="Mohamoud Y."/>
            <person name="Molina M."/>
            <person name="Monod M."/>
            <person name="Mouyna I."/>
            <person name="Mulligan S."/>
            <person name="Murphy L.D."/>
            <person name="O'Neil S."/>
            <person name="Paulsen I."/>
            <person name="Penalva M.A."/>
            <person name="Pertea M."/>
            <person name="Price C."/>
            <person name="Pritchard B.L."/>
            <person name="Quail M.A."/>
            <person name="Rabbinowitsch E."/>
            <person name="Rawlins N."/>
            <person name="Rajandream M.A."/>
            <person name="Reichard U."/>
            <person name="Renauld H."/>
            <person name="Robson G.D."/>
            <person name="Rodriguez de Cordoba S."/>
            <person name="Rodriguez-Pena J.M."/>
            <person name="Ronning C.M."/>
            <person name="Rutter S."/>
            <person name="Salzberg S.L."/>
            <person name="Sanchez M."/>
            <person name="Sanchez-Ferrero J.C."/>
            <person name="Saunders D."/>
            <person name="Seeger K."/>
            <person name="Squares R."/>
            <person name="Squares S."/>
            <person name="Takeuchi M."/>
            <person name="Tekaia F."/>
            <person name="Turner G."/>
            <person name="Vazquez de Aldana C.R."/>
            <person name="Weidman J."/>
            <person name="White O."/>
            <person name="Woodward J.R."/>
            <person name="Yu J.-H."/>
            <person name="Fraser C.M."/>
            <person name="Galagan J.E."/>
            <person name="Asai K."/>
            <person name="Machida M."/>
            <person name="Hall N."/>
            <person name="Barrell B.G."/>
            <person name="Denning D.W."/>
        </authorList>
    </citation>
    <scope>NUCLEOTIDE SEQUENCE [LARGE SCALE GENOMIC DNA]</scope>
    <source>
        <strain>ATCC MYA-4609 / CBS 101355 / FGSC A1100 / Af293</strain>
    </source>
</reference>
<reference key="2">
    <citation type="journal article" date="1998" name="Int. Arch. Allergy Immunol.">
        <title>Recombinant Aspergillus fumigatus allergens: from the nucleotide sequences to clinical applications.</title>
        <authorList>
            <person name="Crameri R."/>
        </authorList>
    </citation>
    <scope>NUCLEOTIDE SEQUENCE [MRNA] OF 159-270</scope>
    <source>
        <strain>ATCC 42202 / AF-102 / Ag 507</strain>
    </source>
</reference>
<protein>
    <recommendedName>
        <fullName>Allergen Asp f 7</fullName>
    </recommendedName>
    <allergenName>Asp f 7</allergenName>
</protein>
<feature type="signal peptide" evidence="1">
    <location>
        <begin position="1"/>
        <end position="21"/>
    </location>
</feature>
<feature type="chain" id="PRO_0000043347" description="Allergen Asp f 7">
    <location>
        <begin position="22"/>
        <end position="270"/>
    </location>
</feature>
<feature type="region of interest" description="Disordered" evidence="2">
    <location>
        <begin position="53"/>
        <end position="97"/>
    </location>
</feature>
<feature type="region of interest" description="Disordered" evidence="2">
    <location>
        <begin position="113"/>
        <end position="167"/>
    </location>
</feature>
<feature type="compositionally biased region" description="Low complexity" evidence="2">
    <location>
        <begin position="63"/>
        <end position="81"/>
    </location>
</feature>
<feature type="compositionally biased region" description="Polar residues" evidence="2">
    <location>
        <begin position="83"/>
        <end position="97"/>
    </location>
</feature>
<feature type="compositionally biased region" description="Low complexity" evidence="2">
    <location>
        <begin position="127"/>
        <end position="149"/>
    </location>
</feature>
<feature type="compositionally biased region" description="Polar residues" evidence="2">
    <location>
        <begin position="150"/>
        <end position="162"/>
    </location>
</feature>
<evidence type="ECO:0000255" key="1"/>
<evidence type="ECO:0000256" key="2">
    <source>
        <dbReference type="SAM" id="MobiDB-lite"/>
    </source>
</evidence>
<accession>O42799</accession>
<accession>Q4WNR3</accession>
<keyword id="KW-0020">Allergen</keyword>
<keyword id="KW-1185">Reference proteome</keyword>
<keyword id="KW-0732">Signal</keyword>
<gene>
    <name type="ORF">AFUA_4G06670</name>
</gene>